<proteinExistence type="evidence at transcript level"/>
<sequence length="328" mass="35644">MFGRTLFPARVIALGSGLFRTPLRTLAAGPALSIGGIYPPIATPFTDKEEVDYGKLHENLQNYSSFPFRGFVVQGSNGEYAYLTREERLEVVRRVRQAVPKEKLIMAGSGCESTQATIEMTVEMAQSGADAVLVVTPSYYRGKMTSSALVHHYTKVADHSPVPVVLYSVPANTGLDLPVDAVVTLSQHPNIIGLKDSGGDITRIGLIIHKTKHLGFQVLSGSAGFLLAGYSVGAVGGVCALANVLGAQVCELERLCLNGRWQEAKELQYRLIEPNTAVTRKFGIPGLKQAMEWFGFNGGKCRSPLLPLTEQEIKELRHIFTVNGWLSL</sequence>
<reference key="1">
    <citation type="submission" date="2004-12" db="EMBL/GenBank/DDBJ databases">
        <authorList>
            <consortium name="NIH - Xenopus Gene Collection (XGC) project"/>
        </authorList>
    </citation>
    <scope>NUCLEOTIDE SEQUENCE [LARGE SCALE MRNA]</scope>
</reference>
<accession>Q5M8W9</accession>
<keyword id="KW-0456">Lyase</keyword>
<keyword id="KW-0496">Mitochondrion</keyword>
<keyword id="KW-1185">Reference proteome</keyword>
<keyword id="KW-0704">Schiff base</keyword>
<keyword id="KW-0809">Transit peptide</keyword>
<name>HOGA1_XENTR</name>
<organism>
    <name type="scientific">Xenopus tropicalis</name>
    <name type="common">Western clawed frog</name>
    <name type="synonym">Silurana tropicalis</name>
    <dbReference type="NCBI Taxonomy" id="8364"/>
    <lineage>
        <taxon>Eukaryota</taxon>
        <taxon>Metazoa</taxon>
        <taxon>Chordata</taxon>
        <taxon>Craniata</taxon>
        <taxon>Vertebrata</taxon>
        <taxon>Euteleostomi</taxon>
        <taxon>Amphibia</taxon>
        <taxon>Batrachia</taxon>
        <taxon>Anura</taxon>
        <taxon>Pipoidea</taxon>
        <taxon>Pipidae</taxon>
        <taxon>Xenopodinae</taxon>
        <taxon>Xenopus</taxon>
        <taxon>Silurana</taxon>
    </lineage>
</organism>
<comment type="function">
    <text evidence="1">Catalyzes the final step in the metabolic pathway of hydroxyproline.</text>
</comment>
<comment type="catalytic activity">
    <reaction>
        <text>(4S)-4-hydroxy-2-oxoglutarate = glyoxylate + pyruvate</text>
        <dbReference type="Rhea" id="RHEA:35639"/>
        <dbReference type="ChEBI" id="CHEBI:15361"/>
        <dbReference type="ChEBI" id="CHEBI:36655"/>
        <dbReference type="ChEBI" id="CHEBI:71685"/>
        <dbReference type="EC" id="4.1.3.16"/>
    </reaction>
</comment>
<comment type="catalytic activity">
    <reaction>
        <text>(4R)-4-hydroxy-2-oxoglutarate = glyoxylate + pyruvate</text>
        <dbReference type="Rhea" id="RHEA:30687"/>
        <dbReference type="ChEBI" id="CHEBI:15361"/>
        <dbReference type="ChEBI" id="CHEBI:36655"/>
        <dbReference type="ChEBI" id="CHEBI:62213"/>
        <dbReference type="EC" id="4.1.3.16"/>
    </reaction>
</comment>
<comment type="activity regulation">
    <text evidence="1">Inhibited by divalent cations.</text>
</comment>
<comment type="subunit">
    <text evidence="1">Homotetramer.</text>
</comment>
<comment type="subcellular location">
    <subcellularLocation>
        <location evidence="2">Mitochondrion</location>
    </subcellularLocation>
</comment>
<comment type="similarity">
    <text evidence="4">Belongs to the DapA family.</text>
</comment>
<evidence type="ECO:0000250" key="1"/>
<evidence type="ECO:0000250" key="2">
    <source>
        <dbReference type="UniProtKB" id="Q0P5I5"/>
    </source>
</evidence>
<evidence type="ECO:0000255" key="3"/>
<evidence type="ECO:0000305" key="4"/>
<protein>
    <recommendedName>
        <fullName>4-hydroxy-2-oxoglutarate aldolase, mitochondrial</fullName>
        <ecNumber>4.1.3.16</ecNumber>
    </recommendedName>
    <alternativeName>
        <fullName>Dihydrodipicolinate synthase-like</fullName>
        <shortName>DHDPS-like protein</shortName>
    </alternativeName>
    <alternativeName>
        <fullName>Probable 2-keto-4-hydroxyglutarate aldolase</fullName>
        <shortName>Probable KHG-aldolase</shortName>
    </alternativeName>
</protein>
<dbReference type="EC" id="4.1.3.16"/>
<dbReference type="EMBL" id="CF375968">
    <property type="status" value="NOT_ANNOTATED_CDS"/>
    <property type="molecule type" value="mRNA"/>
</dbReference>
<dbReference type="EMBL" id="BC087798">
    <property type="protein sequence ID" value="AAH87798.1"/>
    <property type="molecule type" value="mRNA"/>
</dbReference>
<dbReference type="RefSeq" id="NP_001263607.1">
    <property type="nucleotide sequence ID" value="NM_001276678.1"/>
</dbReference>
<dbReference type="SMR" id="Q5M8W9"/>
<dbReference type="FunCoup" id="Q5M8W9">
    <property type="interactions" value="564"/>
</dbReference>
<dbReference type="STRING" id="8364.ENSXETP00000008975"/>
<dbReference type="PaxDb" id="8364-ENSXETP00000007453"/>
<dbReference type="GeneID" id="496669"/>
<dbReference type="KEGG" id="xtr:496669"/>
<dbReference type="AGR" id="Xenbase:XB-GENE-957775"/>
<dbReference type="CTD" id="112817"/>
<dbReference type="Xenbase" id="XB-GENE-957775">
    <property type="gene designation" value="hoga1"/>
</dbReference>
<dbReference type="eggNOG" id="ENOG502QWNS">
    <property type="taxonomic scope" value="Eukaryota"/>
</dbReference>
<dbReference type="InParanoid" id="Q5M8W9"/>
<dbReference type="OMA" id="GMDACVP"/>
<dbReference type="OrthoDB" id="191315at2759"/>
<dbReference type="Reactome" id="R-XTR-389661">
    <property type="pathway name" value="Glyoxylate metabolism and glycine degradation"/>
</dbReference>
<dbReference type="Proteomes" id="UP000008143">
    <property type="component" value="Chromosome 7"/>
</dbReference>
<dbReference type="Bgee" id="ENSXETG00000003443">
    <property type="expression patterns" value="Expressed in mesonephros and 10 other cell types or tissues"/>
</dbReference>
<dbReference type="ExpressionAtlas" id="Q5M8W9">
    <property type="expression patterns" value="baseline"/>
</dbReference>
<dbReference type="GO" id="GO:0005739">
    <property type="term" value="C:mitochondrion"/>
    <property type="evidence" value="ECO:0007669"/>
    <property type="project" value="UniProtKB-SubCell"/>
</dbReference>
<dbReference type="GO" id="GO:0106009">
    <property type="term" value="F:(4S)-4-hydroxy-2-oxoglutarate aldolase activity"/>
    <property type="evidence" value="ECO:0007669"/>
    <property type="project" value="RHEA"/>
</dbReference>
<dbReference type="GO" id="GO:0008700">
    <property type="term" value="F:(R,S)-4-hydroxy-2-oxoglutarate aldolase activity"/>
    <property type="evidence" value="ECO:0007669"/>
    <property type="project" value="UniProtKB-EC"/>
</dbReference>
<dbReference type="GO" id="GO:0044281">
    <property type="term" value="P:small molecule metabolic process"/>
    <property type="evidence" value="ECO:0007669"/>
    <property type="project" value="UniProtKB-ARBA"/>
</dbReference>
<dbReference type="CDD" id="cd00408">
    <property type="entry name" value="DHDPS-like"/>
    <property type="match status" value="1"/>
</dbReference>
<dbReference type="Gene3D" id="3.20.20.70">
    <property type="entry name" value="Aldolase class I"/>
    <property type="match status" value="1"/>
</dbReference>
<dbReference type="InterPro" id="IPR013785">
    <property type="entry name" value="Aldolase_TIM"/>
</dbReference>
<dbReference type="InterPro" id="IPR002220">
    <property type="entry name" value="DapA-like"/>
</dbReference>
<dbReference type="InterPro" id="IPR020625">
    <property type="entry name" value="Schiff_base-form_aldolases_AS"/>
</dbReference>
<dbReference type="PANTHER" id="PTHR12128:SF66">
    <property type="entry name" value="4-HYDROXY-2-OXOGLUTARATE ALDOLASE, MITOCHONDRIAL"/>
    <property type="match status" value="1"/>
</dbReference>
<dbReference type="PANTHER" id="PTHR12128">
    <property type="entry name" value="DIHYDRODIPICOLINATE SYNTHASE"/>
    <property type="match status" value="1"/>
</dbReference>
<dbReference type="Pfam" id="PF00701">
    <property type="entry name" value="DHDPS"/>
    <property type="match status" value="1"/>
</dbReference>
<dbReference type="PIRSF" id="PIRSF001365">
    <property type="entry name" value="DHDPS"/>
    <property type="match status" value="1"/>
</dbReference>
<dbReference type="PRINTS" id="PR00146">
    <property type="entry name" value="DHPICSNTHASE"/>
</dbReference>
<dbReference type="SMART" id="SM01130">
    <property type="entry name" value="DHDPS"/>
    <property type="match status" value="1"/>
</dbReference>
<dbReference type="SUPFAM" id="SSF51569">
    <property type="entry name" value="Aldolase"/>
    <property type="match status" value="1"/>
</dbReference>
<dbReference type="PROSITE" id="PS00666">
    <property type="entry name" value="DHDPS_2"/>
    <property type="match status" value="1"/>
</dbReference>
<feature type="transit peptide" description="Mitochondrion" evidence="3">
    <location>
        <begin position="1"/>
        <end position="26"/>
    </location>
</feature>
<feature type="chain" id="PRO_0000273350" description="4-hydroxy-2-oxoglutarate aldolase, mitochondrial">
    <location>
        <begin position="27"/>
        <end position="328"/>
    </location>
</feature>
<feature type="active site" description="Schiff-base intermediate with substrate" evidence="1">
    <location>
        <position position="195"/>
    </location>
</feature>
<feature type="binding site" evidence="1">
    <location>
        <begin position="76"/>
        <end position="77"/>
    </location>
    <ligand>
        <name>substrate</name>
    </ligand>
</feature>
<feature type="binding site" evidence="1">
    <location>
        <position position="197"/>
    </location>
    <ligand>
        <name>substrate</name>
    </ligand>
</feature>
<feature type="binding site" evidence="1">
    <location>
        <position position="221"/>
    </location>
    <ligand>
        <name>substrate</name>
    </ligand>
</feature>
<feature type="site" description="Involved in proton transfer during cleavage" evidence="1">
    <location>
        <position position="167"/>
    </location>
</feature>
<gene>
    <name type="primary">hoga1</name>
</gene>